<organism>
    <name type="scientific">Buchnera aphidicola subsp. Schizaphis graminum (strain Sg)</name>
    <dbReference type="NCBI Taxonomy" id="198804"/>
    <lineage>
        <taxon>Bacteria</taxon>
        <taxon>Pseudomonadati</taxon>
        <taxon>Pseudomonadota</taxon>
        <taxon>Gammaproteobacteria</taxon>
        <taxon>Enterobacterales</taxon>
        <taxon>Erwiniaceae</taxon>
        <taxon>Buchnera</taxon>
    </lineage>
</organism>
<keyword id="KW-0133">Cell shape</keyword>
<keyword id="KW-0961">Cell wall biogenesis/degradation</keyword>
<keyword id="KW-0413">Isomerase</keyword>
<keyword id="KW-0573">Peptidoglycan synthesis</keyword>
<comment type="function">
    <text evidence="1">Provides the (R)-glutamate required for cell wall biosynthesis.</text>
</comment>
<comment type="catalytic activity">
    <reaction evidence="1">
        <text>L-glutamate = D-glutamate</text>
        <dbReference type="Rhea" id="RHEA:12813"/>
        <dbReference type="ChEBI" id="CHEBI:29985"/>
        <dbReference type="ChEBI" id="CHEBI:29986"/>
        <dbReference type="EC" id="5.1.1.3"/>
    </reaction>
</comment>
<comment type="pathway">
    <text evidence="1">Cell wall biogenesis; peptidoglycan biosynthesis.</text>
</comment>
<comment type="similarity">
    <text evidence="1">Belongs to the aspartate/glutamate racemases family.</text>
</comment>
<accession>Q8K924</accession>
<feature type="chain" id="PRO_0000095460" description="Glutamate racemase">
    <location>
        <begin position="1"/>
        <end position="256"/>
    </location>
</feature>
<feature type="active site" description="Proton donor/acceptor" evidence="1">
    <location>
        <position position="69"/>
    </location>
</feature>
<feature type="active site" description="Proton donor/acceptor" evidence="1">
    <location>
        <position position="181"/>
    </location>
</feature>
<feature type="binding site" evidence="1">
    <location>
        <begin position="5"/>
        <end position="6"/>
    </location>
    <ligand>
        <name>substrate</name>
    </ligand>
</feature>
<feature type="binding site" evidence="1">
    <location>
        <begin position="37"/>
        <end position="38"/>
    </location>
    <ligand>
        <name>substrate</name>
    </ligand>
</feature>
<feature type="binding site" evidence="1">
    <location>
        <begin position="70"/>
        <end position="71"/>
    </location>
    <ligand>
        <name>substrate</name>
    </ligand>
</feature>
<feature type="binding site" evidence="1">
    <location>
        <begin position="182"/>
        <end position="183"/>
    </location>
    <ligand>
        <name>substrate</name>
    </ligand>
</feature>
<evidence type="ECO:0000255" key="1">
    <source>
        <dbReference type="HAMAP-Rule" id="MF_00258"/>
    </source>
</evidence>
<sequence length="256" mass="29628">MLIIDSGIGGLSILDNIKKKFPHINYIYMLDNEAFPYGKKKEKFLIERSIKIINAIKKIYPIKMVIIACNTASTISLPTLKKTFSIPIIGVLPVFKPAIKITKNKIIGLIATRSTINSLYIKKTIYKYSLENTIKIIATNELAVIAEKKVRKLSISNIKLKKIFQSWIILSIKPDTIILGCTHFSFLKKEIQQIFHKPINFIDPGDTIVNKIEKYFYQKKIKKNILLCSKYNKQIKQLVFFLKKYKFKKIQEINLN</sequence>
<protein>
    <recommendedName>
        <fullName evidence="1">Glutamate racemase</fullName>
        <ecNumber evidence="1">5.1.1.3</ecNumber>
    </recommendedName>
</protein>
<dbReference type="EC" id="5.1.1.3" evidence="1"/>
<dbReference type="EMBL" id="AE013218">
    <property type="protein sequence ID" value="AAM68077.1"/>
    <property type="molecule type" value="Genomic_DNA"/>
</dbReference>
<dbReference type="RefSeq" id="WP_011054043.1">
    <property type="nucleotide sequence ID" value="NC_004061.1"/>
</dbReference>
<dbReference type="SMR" id="Q8K924"/>
<dbReference type="STRING" id="198804.BUsg_536"/>
<dbReference type="GeneID" id="93004011"/>
<dbReference type="KEGG" id="bas:BUsg_536"/>
<dbReference type="eggNOG" id="COG0796">
    <property type="taxonomic scope" value="Bacteria"/>
</dbReference>
<dbReference type="HOGENOM" id="CLU_052344_2_0_6"/>
<dbReference type="UniPathway" id="UPA00219"/>
<dbReference type="Proteomes" id="UP000000416">
    <property type="component" value="Chromosome"/>
</dbReference>
<dbReference type="GO" id="GO:0008881">
    <property type="term" value="F:glutamate racemase activity"/>
    <property type="evidence" value="ECO:0007669"/>
    <property type="project" value="UniProtKB-UniRule"/>
</dbReference>
<dbReference type="GO" id="GO:0071555">
    <property type="term" value="P:cell wall organization"/>
    <property type="evidence" value="ECO:0007669"/>
    <property type="project" value="UniProtKB-KW"/>
</dbReference>
<dbReference type="GO" id="GO:0009252">
    <property type="term" value="P:peptidoglycan biosynthetic process"/>
    <property type="evidence" value="ECO:0007669"/>
    <property type="project" value="UniProtKB-UniRule"/>
</dbReference>
<dbReference type="GO" id="GO:0008360">
    <property type="term" value="P:regulation of cell shape"/>
    <property type="evidence" value="ECO:0007669"/>
    <property type="project" value="UniProtKB-KW"/>
</dbReference>
<dbReference type="Gene3D" id="3.40.50.1860">
    <property type="match status" value="2"/>
</dbReference>
<dbReference type="HAMAP" id="MF_00258">
    <property type="entry name" value="Glu_racemase"/>
    <property type="match status" value="1"/>
</dbReference>
<dbReference type="InterPro" id="IPR015942">
    <property type="entry name" value="Asp/Glu/hydantoin_racemase"/>
</dbReference>
<dbReference type="InterPro" id="IPR001920">
    <property type="entry name" value="Asp/Glu_race"/>
</dbReference>
<dbReference type="InterPro" id="IPR018187">
    <property type="entry name" value="Asp/Glu_racemase_AS_1"/>
</dbReference>
<dbReference type="InterPro" id="IPR033134">
    <property type="entry name" value="Asp/Glu_racemase_AS_2"/>
</dbReference>
<dbReference type="InterPro" id="IPR004391">
    <property type="entry name" value="Glu_race"/>
</dbReference>
<dbReference type="NCBIfam" id="TIGR00067">
    <property type="entry name" value="glut_race"/>
    <property type="match status" value="1"/>
</dbReference>
<dbReference type="PANTHER" id="PTHR21198">
    <property type="entry name" value="GLUTAMATE RACEMASE"/>
    <property type="match status" value="1"/>
</dbReference>
<dbReference type="PANTHER" id="PTHR21198:SF2">
    <property type="entry name" value="GLUTAMATE RACEMASE"/>
    <property type="match status" value="1"/>
</dbReference>
<dbReference type="Pfam" id="PF01177">
    <property type="entry name" value="Asp_Glu_race"/>
    <property type="match status" value="1"/>
</dbReference>
<dbReference type="SUPFAM" id="SSF53681">
    <property type="entry name" value="Aspartate/glutamate racemase"/>
    <property type="match status" value="2"/>
</dbReference>
<dbReference type="PROSITE" id="PS00923">
    <property type="entry name" value="ASP_GLU_RACEMASE_1"/>
    <property type="match status" value="1"/>
</dbReference>
<dbReference type="PROSITE" id="PS00924">
    <property type="entry name" value="ASP_GLU_RACEMASE_2"/>
    <property type="match status" value="1"/>
</dbReference>
<reference key="1">
    <citation type="journal article" date="2002" name="Science">
        <title>50 million years of genomic stasis in endosymbiotic bacteria.</title>
        <authorList>
            <person name="Tamas I."/>
            <person name="Klasson L."/>
            <person name="Canbaeck B."/>
            <person name="Naeslund A.K."/>
            <person name="Eriksson A.-S."/>
            <person name="Wernegreen J.J."/>
            <person name="Sandstroem J.P."/>
            <person name="Moran N.A."/>
            <person name="Andersson S.G.E."/>
        </authorList>
    </citation>
    <scope>NUCLEOTIDE SEQUENCE [LARGE SCALE GENOMIC DNA]</scope>
    <source>
        <strain>Sg</strain>
    </source>
</reference>
<name>MURI_BUCAP</name>
<gene>
    <name evidence="1" type="primary">murI</name>
    <name type="ordered locus">BUsg_536</name>
</gene>
<proteinExistence type="inferred from homology"/>